<reference key="1">
    <citation type="journal article" date="2004" name="Nat. Biotechnol.">
        <title>The genome sequence of the anaerobic, sulfate-reducing bacterium Desulfovibrio vulgaris Hildenborough.</title>
        <authorList>
            <person name="Heidelberg J.F."/>
            <person name="Seshadri R."/>
            <person name="Haveman S.A."/>
            <person name="Hemme C.L."/>
            <person name="Paulsen I.T."/>
            <person name="Kolonay J.F."/>
            <person name="Eisen J.A."/>
            <person name="Ward N.L."/>
            <person name="Methe B.A."/>
            <person name="Brinkac L.M."/>
            <person name="Daugherty S.C."/>
            <person name="DeBoy R.T."/>
            <person name="Dodson R.J."/>
            <person name="Durkin A.S."/>
            <person name="Madupu R."/>
            <person name="Nelson W.C."/>
            <person name="Sullivan S.A."/>
            <person name="Fouts D.E."/>
            <person name="Haft D.H."/>
            <person name="Selengut J."/>
            <person name="Peterson J.D."/>
            <person name="Davidsen T.M."/>
            <person name="Zafar N."/>
            <person name="Zhou L."/>
            <person name="Radune D."/>
            <person name="Dimitrov G."/>
            <person name="Hance M."/>
            <person name="Tran K."/>
            <person name="Khouri H.M."/>
            <person name="Gill J."/>
            <person name="Utterback T.R."/>
            <person name="Feldblyum T.V."/>
            <person name="Wall J.D."/>
            <person name="Voordouw G."/>
            <person name="Fraser C.M."/>
        </authorList>
    </citation>
    <scope>NUCLEOTIDE SEQUENCE [LARGE SCALE GENOMIC DNA]</scope>
    <source>
        <strain>ATCC 29579 / DSM 644 / CCUG 34227 / NCIMB 8303 / VKM B-1760 / Hildenborough</strain>
    </source>
</reference>
<protein>
    <recommendedName>
        <fullName evidence="1">Small ribosomal subunit protein uS9</fullName>
    </recommendedName>
    <alternativeName>
        <fullName evidence="2">30S ribosomal protein S9</fullName>
    </alternativeName>
</protein>
<keyword id="KW-1185">Reference proteome</keyword>
<keyword id="KW-0687">Ribonucleoprotein</keyword>
<keyword id="KW-0689">Ribosomal protein</keyword>
<evidence type="ECO:0000255" key="1">
    <source>
        <dbReference type="HAMAP-Rule" id="MF_00532"/>
    </source>
</evidence>
<evidence type="ECO:0000305" key="2"/>
<dbReference type="EMBL" id="AE017285">
    <property type="protein sequence ID" value="AAS96991.1"/>
    <property type="molecule type" value="Genomic_DNA"/>
</dbReference>
<dbReference type="RefSeq" id="WP_010939789.1">
    <property type="nucleotide sequence ID" value="NC_002937.3"/>
</dbReference>
<dbReference type="RefSeq" id="YP_011731.1">
    <property type="nucleotide sequence ID" value="NC_002937.3"/>
</dbReference>
<dbReference type="SMR" id="Q728T3"/>
<dbReference type="STRING" id="882.DVU_2519"/>
<dbReference type="PaxDb" id="882-DVU_2519"/>
<dbReference type="EnsemblBacteria" id="AAS96991">
    <property type="protein sequence ID" value="AAS96991"/>
    <property type="gene ID" value="DVU_2519"/>
</dbReference>
<dbReference type="KEGG" id="dvu:DVU_2519"/>
<dbReference type="PATRIC" id="fig|882.5.peg.2279"/>
<dbReference type="eggNOG" id="COG0103">
    <property type="taxonomic scope" value="Bacteria"/>
</dbReference>
<dbReference type="HOGENOM" id="CLU_046483_2_1_7"/>
<dbReference type="OrthoDB" id="9803965at2"/>
<dbReference type="PhylomeDB" id="Q728T3"/>
<dbReference type="Proteomes" id="UP000002194">
    <property type="component" value="Chromosome"/>
</dbReference>
<dbReference type="GO" id="GO:0022627">
    <property type="term" value="C:cytosolic small ribosomal subunit"/>
    <property type="evidence" value="ECO:0007669"/>
    <property type="project" value="TreeGrafter"/>
</dbReference>
<dbReference type="GO" id="GO:0003723">
    <property type="term" value="F:RNA binding"/>
    <property type="evidence" value="ECO:0007669"/>
    <property type="project" value="TreeGrafter"/>
</dbReference>
<dbReference type="GO" id="GO:0003735">
    <property type="term" value="F:structural constituent of ribosome"/>
    <property type="evidence" value="ECO:0007669"/>
    <property type="project" value="InterPro"/>
</dbReference>
<dbReference type="GO" id="GO:0006412">
    <property type="term" value="P:translation"/>
    <property type="evidence" value="ECO:0007669"/>
    <property type="project" value="UniProtKB-UniRule"/>
</dbReference>
<dbReference type="FunFam" id="3.30.230.10:FF:000001">
    <property type="entry name" value="30S ribosomal protein S9"/>
    <property type="match status" value="1"/>
</dbReference>
<dbReference type="Gene3D" id="3.30.230.10">
    <property type="match status" value="1"/>
</dbReference>
<dbReference type="HAMAP" id="MF_00532_B">
    <property type="entry name" value="Ribosomal_uS9_B"/>
    <property type="match status" value="1"/>
</dbReference>
<dbReference type="InterPro" id="IPR020568">
    <property type="entry name" value="Ribosomal_Su5_D2-typ_SF"/>
</dbReference>
<dbReference type="InterPro" id="IPR000754">
    <property type="entry name" value="Ribosomal_uS9"/>
</dbReference>
<dbReference type="InterPro" id="IPR023035">
    <property type="entry name" value="Ribosomal_uS9_bac/plastid"/>
</dbReference>
<dbReference type="InterPro" id="IPR020574">
    <property type="entry name" value="Ribosomal_uS9_CS"/>
</dbReference>
<dbReference type="InterPro" id="IPR014721">
    <property type="entry name" value="Ribsml_uS5_D2-typ_fold_subgr"/>
</dbReference>
<dbReference type="NCBIfam" id="NF001099">
    <property type="entry name" value="PRK00132.1"/>
    <property type="match status" value="1"/>
</dbReference>
<dbReference type="PANTHER" id="PTHR21569">
    <property type="entry name" value="RIBOSOMAL PROTEIN S9"/>
    <property type="match status" value="1"/>
</dbReference>
<dbReference type="PANTHER" id="PTHR21569:SF1">
    <property type="entry name" value="SMALL RIBOSOMAL SUBUNIT PROTEIN US9M"/>
    <property type="match status" value="1"/>
</dbReference>
<dbReference type="Pfam" id="PF00380">
    <property type="entry name" value="Ribosomal_S9"/>
    <property type="match status" value="1"/>
</dbReference>
<dbReference type="SUPFAM" id="SSF54211">
    <property type="entry name" value="Ribosomal protein S5 domain 2-like"/>
    <property type="match status" value="1"/>
</dbReference>
<dbReference type="PROSITE" id="PS00360">
    <property type="entry name" value="RIBOSOMAL_S9"/>
    <property type="match status" value="1"/>
</dbReference>
<proteinExistence type="inferred from homology"/>
<sequence>MTKEFNYGTGRRKTATARTRLYPGTGVIEINGRPYEEFFPRKTLQMIIRQPLVLTKMLEKFDVKVNVAGGGISGQAEAVRHGISRALLELDAELRPVLKRAGFLTRDARKKERKKYGLRAARARYQYSKR</sequence>
<name>RS9_NITV2</name>
<feature type="chain" id="PRO_1000051217" description="Small ribosomal subunit protein uS9">
    <location>
        <begin position="1"/>
        <end position="130"/>
    </location>
</feature>
<organism>
    <name type="scientific">Nitratidesulfovibrio vulgaris (strain ATCC 29579 / DSM 644 / CCUG 34227 / NCIMB 8303 / VKM B-1760 / Hildenborough)</name>
    <name type="common">Desulfovibrio vulgaris</name>
    <dbReference type="NCBI Taxonomy" id="882"/>
    <lineage>
        <taxon>Bacteria</taxon>
        <taxon>Pseudomonadati</taxon>
        <taxon>Thermodesulfobacteriota</taxon>
        <taxon>Desulfovibrionia</taxon>
        <taxon>Desulfovibrionales</taxon>
        <taxon>Desulfovibrionaceae</taxon>
        <taxon>Nitratidesulfovibrio</taxon>
    </lineage>
</organism>
<gene>
    <name evidence="1" type="primary">rpsI</name>
    <name type="ordered locus">DVU_2519</name>
</gene>
<comment type="similarity">
    <text evidence="1">Belongs to the universal ribosomal protein uS9 family.</text>
</comment>
<accession>Q728T3</accession>